<reference key="1">
    <citation type="journal article" date="2003" name="Mol. Microbiol.">
        <title>Genome-based analysis of virulence genes in a non-biofilm-forming Staphylococcus epidermidis strain (ATCC 12228).</title>
        <authorList>
            <person name="Zhang Y.-Q."/>
            <person name="Ren S.-X."/>
            <person name="Li H.-L."/>
            <person name="Wang Y.-X."/>
            <person name="Fu G."/>
            <person name="Yang J."/>
            <person name="Qin Z.-Q."/>
            <person name="Miao Y.-G."/>
            <person name="Wang W.-Y."/>
            <person name="Chen R.-S."/>
            <person name="Shen Y."/>
            <person name="Chen Z."/>
            <person name="Yuan Z.-H."/>
            <person name="Zhao G.-P."/>
            <person name="Qu D."/>
            <person name="Danchin A."/>
            <person name="Wen Y.-M."/>
        </authorList>
    </citation>
    <scope>NUCLEOTIDE SEQUENCE [LARGE SCALE GENOMIC DNA]</scope>
    <source>
        <strain>ATCC 12228 / FDA PCI 1200</strain>
    </source>
</reference>
<sequence>MRKLIVGSRRSKLALTQSQQFIDKLKFIDPSLDIEIKEIVTKGDKIVDKQLSKVGGKGLFVKEIQNELFNKEIDMAIHSLKDVPSMIPDGLTLGCIPDREIPFDAYIAKNHIPLQELSEGSIVGTSSLRRGAQILSKYPHLKIKWIRGNIDTRLKKLETEDYDAIILAAAGLKRMGWSDNIVTTYLDRDILLPAIGQGALGIECRSDDKELLDLLSKVHNHDVAQCVTAERTFLSEMDGSCQVPIGGYATIAQDNQIEFTGLIMSPDGKERYEHTALGTDPVKLGIEVSQVLKKQGAYDIIKKLNEAE</sequence>
<organism>
    <name type="scientific">Staphylococcus epidermidis (strain ATCC 12228 / FDA PCI 1200)</name>
    <dbReference type="NCBI Taxonomy" id="176280"/>
    <lineage>
        <taxon>Bacteria</taxon>
        <taxon>Bacillati</taxon>
        <taxon>Bacillota</taxon>
        <taxon>Bacilli</taxon>
        <taxon>Bacillales</taxon>
        <taxon>Staphylococcaceae</taxon>
        <taxon>Staphylococcus</taxon>
    </lineage>
</organism>
<accession>Q8CNY8</accession>
<comment type="function">
    <text evidence="1">Tetrapolymerization of the monopyrrole PBG into the hydroxymethylbilane pre-uroporphyrinogen in several discrete steps.</text>
</comment>
<comment type="catalytic activity">
    <reaction evidence="1">
        <text>4 porphobilinogen + H2O = hydroxymethylbilane + 4 NH4(+)</text>
        <dbReference type="Rhea" id="RHEA:13185"/>
        <dbReference type="ChEBI" id="CHEBI:15377"/>
        <dbReference type="ChEBI" id="CHEBI:28938"/>
        <dbReference type="ChEBI" id="CHEBI:57845"/>
        <dbReference type="ChEBI" id="CHEBI:58126"/>
        <dbReference type="EC" id="2.5.1.61"/>
    </reaction>
</comment>
<comment type="cofactor">
    <cofactor evidence="1">
        <name>dipyrromethane</name>
        <dbReference type="ChEBI" id="CHEBI:60342"/>
    </cofactor>
    <text evidence="1">Binds 1 dipyrromethane group covalently.</text>
</comment>
<comment type="pathway">
    <text evidence="1">Porphyrin-containing compound metabolism; protoporphyrin-IX biosynthesis; coproporphyrinogen-III from 5-aminolevulinate: step 2/4.</text>
</comment>
<comment type="subunit">
    <text evidence="1">Monomer.</text>
</comment>
<comment type="miscellaneous">
    <text evidence="1">The porphobilinogen subunits are added to the dipyrromethane group.</text>
</comment>
<comment type="similarity">
    <text evidence="1">Belongs to the HMBS family.</text>
</comment>
<keyword id="KW-0627">Porphyrin biosynthesis</keyword>
<keyword id="KW-0808">Transferase</keyword>
<gene>
    <name evidence="1" type="primary">hemC</name>
    <name type="ordered locus">SE_1345</name>
</gene>
<protein>
    <recommendedName>
        <fullName evidence="1">Porphobilinogen deaminase</fullName>
        <shortName evidence="1">PBG</shortName>
        <ecNumber evidence="1">2.5.1.61</ecNumber>
    </recommendedName>
    <alternativeName>
        <fullName evidence="1">Hydroxymethylbilane synthase</fullName>
        <shortName evidence="1">HMBS</shortName>
    </alternativeName>
    <alternativeName>
        <fullName evidence="1">Pre-uroporphyrinogen synthase</fullName>
    </alternativeName>
</protein>
<name>HEM3_STAES</name>
<proteinExistence type="inferred from homology"/>
<feature type="chain" id="PRO_0000142995" description="Porphobilinogen deaminase">
    <location>
        <begin position="1"/>
        <end position="308"/>
    </location>
</feature>
<feature type="modified residue" description="S-(dipyrrolylmethanemethyl)cysteine" evidence="1">
    <location>
        <position position="241"/>
    </location>
</feature>
<evidence type="ECO:0000255" key="1">
    <source>
        <dbReference type="HAMAP-Rule" id="MF_00260"/>
    </source>
</evidence>
<dbReference type="EC" id="2.5.1.61" evidence="1"/>
<dbReference type="EMBL" id="AE015929">
    <property type="protein sequence ID" value="AAO04944.1"/>
    <property type="molecule type" value="Genomic_DNA"/>
</dbReference>
<dbReference type="RefSeq" id="NP_764900.1">
    <property type="nucleotide sequence ID" value="NC_004461.1"/>
</dbReference>
<dbReference type="RefSeq" id="WP_001830811.1">
    <property type="nucleotide sequence ID" value="NZ_WBME01000016.1"/>
</dbReference>
<dbReference type="SMR" id="Q8CNY8"/>
<dbReference type="GeneID" id="50018540"/>
<dbReference type="KEGG" id="sep:SE_1345"/>
<dbReference type="PATRIC" id="fig|176280.10.peg.1314"/>
<dbReference type="eggNOG" id="COG0181">
    <property type="taxonomic scope" value="Bacteria"/>
</dbReference>
<dbReference type="HOGENOM" id="CLU_019704_1_2_9"/>
<dbReference type="OrthoDB" id="9810298at2"/>
<dbReference type="UniPathway" id="UPA00251">
    <property type="reaction ID" value="UER00319"/>
</dbReference>
<dbReference type="Proteomes" id="UP000001411">
    <property type="component" value="Chromosome"/>
</dbReference>
<dbReference type="GO" id="GO:0005737">
    <property type="term" value="C:cytoplasm"/>
    <property type="evidence" value="ECO:0007669"/>
    <property type="project" value="TreeGrafter"/>
</dbReference>
<dbReference type="GO" id="GO:0004418">
    <property type="term" value="F:hydroxymethylbilane synthase activity"/>
    <property type="evidence" value="ECO:0007669"/>
    <property type="project" value="UniProtKB-UniRule"/>
</dbReference>
<dbReference type="GO" id="GO:0006782">
    <property type="term" value="P:protoporphyrinogen IX biosynthetic process"/>
    <property type="evidence" value="ECO:0007669"/>
    <property type="project" value="UniProtKB-UniRule"/>
</dbReference>
<dbReference type="CDD" id="cd13646">
    <property type="entry name" value="PBP2_EcHMBS_like"/>
    <property type="match status" value="1"/>
</dbReference>
<dbReference type="FunFam" id="3.40.190.10:FF:000004">
    <property type="entry name" value="Porphobilinogen deaminase"/>
    <property type="match status" value="1"/>
</dbReference>
<dbReference type="FunFam" id="3.40.190.10:FF:000005">
    <property type="entry name" value="Porphobilinogen deaminase"/>
    <property type="match status" value="1"/>
</dbReference>
<dbReference type="Gene3D" id="3.40.190.10">
    <property type="entry name" value="Periplasmic binding protein-like II"/>
    <property type="match status" value="2"/>
</dbReference>
<dbReference type="Gene3D" id="3.30.160.40">
    <property type="entry name" value="Porphobilinogen deaminase, C-terminal domain"/>
    <property type="match status" value="1"/>
</dbReference>
<dbReference type="HAMAP" id="MF_00260">
    <property type="entry name" value="Porphobil_deam"/>
    <property type="match status" value="1"/>
</dbReference>
<dbReference type="InterPro" id="IPR000860">
    <property type="entry name" value="HemC"/>
</dbReference>
<dbReference type="InterPro" id="IPR022419">
    <property type="entry name" value="Porphobilin_deaminase_cofac_BS"/>
</dbReference>
<dbReference type="InterPro" id="IPR022417">
    <property type="entry name" value="Porphobilin_deaminase_N"/>
</dbReference>
<dbReference type="InterPro" id="IPR022418">
    <property type="entry name" value="Porphobilinogen_deaminase_C"/>
</dbReference>
<dbReference type="InterPro" id="IPR036803">
    <property type="entry name" value="Porphobilinogen_deaminase_C_sf"/>
</dbReference>
<dbReference type="NCBIfam" id="TIGR00212">
    <property type="entry name" value="hemC"/>
    <property type="match status" value="1"/>
</dbReference>
<dbReference type="PANTHER" id="PTHR11557">
    <property type="entry name" value="PORPHOBILINOGEN DEAMINASE"/>
    <property type="match status" value="1"/>
</dbReference>
<dbReference type="PANTHER" id="PTHR11557:SF0">
    <property type="entry name" value="PORPHOBILINOGEN DEAMINASE"/>
    <property type="match status" value="1"/>
</dbReference>
<dbReference type="Pfam" id="PF01379">
    <property type="entry name" value="Porphobil_deam"/>
    <property type="match status" value="1"/>
</dbReference>
<dbReference type="Pfam" id="PF03900">
    <property type="entry name" value="Porphobil_deamC"/>
    <property type="match status" value="1"/>
</dbReference>
<dbReference type="PIRSF" id="PIRSF001438">
    <property type="entry name" value="4pyrrol_synth_OHMeBilane_synth"/>
    <property type="match status" value="1"/>
</dbReference>
<dbReference type="PRINTS" id="PR00151">
    <property type="entry name" value="PORPHBDMNASE"/>
</dbReference>
<dbReference type="SUPFAM" id="SSF53850">
    <property type="entry name" value="Periplasmic binding protein-like II"/>
    <property type="match status" value="1"/>
</dbReference>
<dbReference type="SUPFAM" id="SSF54782">
    <property type="entry name" value="Porphobilinogen deaminase (hydroxymethylbilane synthase), C-terminal domain"/>
    <property type="match status" value="1"/>
</dbReference>
<dbReference type="PROSITE" id="PS00533">
    <property type="entry name" value="PORPHOBILINOGEN_DEAM"/>
    <property type="match status" value="1"/>
</dbReference>